<reference key="1">
    <citation type="journal article" date="2005" name="Nature">
        <title>The genome of the social amoeba Dictyostelium discoideum.</title>
        <authorList>
            <person name="Eichinger L."/>
            <person name="Pachebat J.A."/>
            <person name="Gloeckner G."/>
            <person name="Rajandream M.A."/>
            <person name="Sucgang R."/>
            <person name="Berriman M."/>
            <person name="Song J."/>
            <person name="Olsen R."/>
            <person name="Szafranski K."/>
            <person name="Xu Q."/>
            <person name="Tunggal B."/>
            <person name="Kummerfeld S."/>
            <person name="Madera M."/>
            <person name="Konfortov B.A."/>
            <person name="Rivero F."/>
            <person name="Bankier A.T."/>
            <person name="Lehmann R."/>
            <person name="Hamlin N."/>
            <person name="Davies R."/>
            <person name="Gaudet P."/>
            <person name="Fey P."/>
            <person name="Pilcher K."/>
            <person name="Chen G."/>
            <person name="Saunders D."/>
            <person name="Sodergren E.J."/>
            <person name="Davis P."/>
            <person name="Kerhornou A."/>
            <person name="Nie X."/>
            <person name="Hall N."/>
            <person name="Anjard C."/>
            <person name="Hemphill L."/>
            <person name="Bason N."/>
            <person name="Farbrother P."/>
            <person name="Desany B."/>
            <person name="Just E."/>
            <person name="Morio T."/>
            <person name="Rost R."/>
            <person name="Churcher C.M."/>
            <person name="Cooper J."/>
            <person name="Haydock S."/>
            <person name="van Driessche N."/>
            <person name="Cronin A."/>
            <person name="Goodhead I."/>
            <person name="Muzny D.M."/>
            <person name="Mourier T."/>
            <person name="Pain A."/>
            <person name="Lu M."/>
            <person name="Harper D."/>
            <person name="Lindsay R."/>
            <person name="Hauser H."/>
            <person name="James K.D."/>
            <person name="Quiles M."/>
            <person name="Madan Babu M."/>
            <person name="Saito T."/>
            <person name="Buchrieser C."/>
            <person name="Wardroper A."/>
            <person name="Felder M."/>
            <person name="Thangavelu M."/>
            <person name="Johnson D."/>
            <person name="Knights A."/>
            <person name="Loulseged H."/>
            <person name="Mungall K.L."/>
            <person name="Oliver K."/>
            <person name="Price C."/>
            <person name="Quail M.A."/>
            <person name="Urushihara H."/>
            <person name="Hernandez J."/>
            <person name="Rabbinowitsch E."/>
            <person name="Steffen D."/>
            <person name="Sanders M."/>
            <person name="Ma J."/>
            <person name="Kohara Y."/>
            <person name="Sharp S."/>
            <person name="Simmonds M.N."/>
            <person name="Spiegler S."/>
            <person name="Tivey A."/>
            <person name="Sugano S."/>
            <person name="White B."/>
            <person name="Walker D."/>
            <person name="Woodward J.R."/>
            <person name="Winckler T."/>
            <person name="Tanaka Y."/>
            <person name="Shaulsky G."/>
            <person name="Schleicher M."/>
            <person name="Weinstock G.M."/>
            <person name="Rosenthal A."/>
            <person name="Cox E.C."/>
            <person name="Chisholm R.L."/>
            <person name="Gibbs R.A."/>
            <person name="Loomis W.F."/>
            <person name="Platzer M."/>
            <person name="Kay R.R."/>
            <person name="Williams J.G."/>
            <person name="Dear P.H."/>
            <person name="Noegel A.A."/>
            <person name="Barrell B.G."/>
            <person name="Kuspa A."/>
        </authorList>
    </citation>
    <scope>NUCLEOTIDE SEQUENCE [LARGE SCALE GENOMIC DNA]</scope>
    <source>
        <strain>AX4</strain>
    </source>
</reference>
<reference key="2">
    <citation type="submission" date="2009-07" db="UniProtKB">
        <authorList>
            <person name="Bienvenut W.V."/>
            <person name="Ura S."/>
            <person name="Insall R.H."/>
        </authorList>
    </citation>
    <scope>PROTEIN SEQUENCE OF 65-78; 161-172 AND 209-218</scope>
    <scope>IDENTIFICATION BY MASS SPECTROMETRY</scope>
    <source>
        <strain>AX2</strain>
    </source>
</reference>
<sequence length="847" mass="92818">MLRNSNKLIKSVIKNESTLLKCKNNNQRVVNYSSSSTSITSGNGIYSQIKKIEEFVSKKPSVTKVSSSSATINFNTSKSGSTNTTAVDYSKSVKIKDQKQIVLVKIGGGVIESDISSLIGSLNFLKKIGLFPIVVHGGGPQLNAELAAAGEPAEYVEGLRVTPPSVLAIAQRVFLRENLKIVEALESSGTKARPVTQGVYQATPLDPKLYGFVGNVTKIHTDALASCITNDYVPVISSLAMTPEGQVLNINADVAALELAKSINPLKILFINTTAGMKDGDGKVMQHIKLDEQYADLMKQPWVKHGTKLKLKEFKSCLDVLPPSTSITITSPDLLMKELFAKDGSGTTVERGEVMHSHESPSFDETKFFALIEKSTGTKGGRIDYQQLKTDLSKGVVKAFVNSHYTAGILVRPLSSGSSVSYVDQFFFFNNSIQSTEDSESVFKKMFENSSYIWKESSNNQLNNEWFKKIATGFITGATNNIFWTNIDTNKIENSIKECLSQSSTYLSGITKAASSKSASEKLLQDKNHKFRVGLIGARGFTGGNLVRLIDGHPNLELAIASSSTNFGKPITTEFPQLKSNLKFDNVKPENIDIFTRDHGIDGWFMALPDKISSPYIQTLENSSESPVLVDLSSDHRFNEKWTYGQPETNRAAIKESKLIANPGCYATGMFLTLKPFVNDLVTPPSCFGISGYSGAGSKPSEKNDPTRLSDNILPYKLVQHTHELEVSHQLGSPIYFMPHVGQFFQGITLTISMELKYPMTKEQVVERYQKFYQNEPLIKIDKDGIPEVKSNSGKHTVTIGGFAVNGNHLVVVTTLDNLLKGAATQALQNMNICLGLDELASIKNEL</sequence>
<proteinExistence type="evidence at protein level"/>
<name>ARG56_DICDI</name>
<evidence type="ECO:0000250" key="1"/>
<evidence type="ECO:0000255" key="2"/>
<evidence type="ECO:0000255" key="3">
    <source>
        <dbReference type="PROSITE-ProRule" id="PRU00532"/>
    </source>
</evidence>
<evidence type="ECO:0000255" key="4">
    <source>
        <dbReference type="PROSITE-ProRule" id="PRU10010"/>
    </source>
</evidence>
<evidence type="ECO:0000305" key="5"/>
<protein>
    <recommendedName>
        <fullName>Bifunctional protein argC, mitochondrial</fullName>
    </recommendedName>
    <domain>
        <recommendedName>
            <fullName>N-acetyl-gamma-glutamyl-phosphate reductase</fullName>
            <ecNumber>1.2.1.38</ecNumber>
        </recommendedName>
        <alternativeName>
            <fullName>N-acetyl-glutamate semialdehyde dehydrogenase</fullName>
            <shortName>NAGSA dehydrogenase</shortName>
        </alternativeName>
    </domain>
    <domain>
        <recommendedName>
            <fullName>Acetylglutamate kinase</fullName>
            <ecNumber>2.7.2.8</ecNumber>
        </recommendedName>
        <alternativeName>
            <fullName>N-acetyl-L-glutamate 5-phosphotransferase</fullName>
        </alternativeName>
        <alternativeName>
            <fullName>NAG kinase</fullName>
            <shortName>AGK</shortName>
        </alternativeName>
    </domain>
</protein>
<gene>
    <name type="primary">argC</name>
    <name type="ORF">DDB_G0286257</name>
</gene>
<organism>
    <name type="scientific">Dictyostelium discoideum</name>
    <name type="common">Social amoeba</name>
    <dbReference type="NCBI Taxonomy" id="44689"/>
    <lineage>
        <taxon>Eukaryota</taxon>
        <taxon>Amoebozoa</taxon>
        <taxon>Evosea</taxon>
        <taxon>Eumycetozoa</taxon>
        <taxon>Dictyostelia</taxon>
        <taxon>Dictyosteliales</taxon>
        <taxon>Dictyosteliaceae</taxon>
        <taxon>Dictyostelium</taxon>
    </lineage>
</organism>
<accession>Q54M18</accession>
<comment type="catalytic activity">
    <reaction>
        <text>N-acetyl-L-glutamate 5-semialdehyde + phosphate + NADP(+) = N-acetyl-L-glutamyl 5-phosphate + NADPH + H(+)</text>
        <dbReference type="Rhea" id="RHEA:21588"/>
        <dbReference type="ChEBI" id="CHEBI:15378"/>
        <dbReference type="ChEBI" id="CHEBI:29123"/>
        <dbReference type="ChEBI" id="CHEBI:43474"/>
        <dbReference type="ChEBI" id="CHEBI:57783"/>
        <dbReference type="ChEBI" id="CHEBI:57936"/>
        <dbReference type="ChEBI" id="CHEBI:58349"/>
        <dbReference type="EC" id="1.2.1.38"/>
    </reaction>
</comment>
<comment type="catalytic activity">
    <reaction>
        <text>N-acetyl-L-glutamate + ATP = N-acetyl-L-glutamyl 5-phosphate + ADP</text>
        <dbReference type="Rhea" id="RHEA:14629"/>
        <dbReference type="ChEBI" id="CHEBI:30616"/>
        <dbReference type="ChEBI" id="CHEBI:44337"/>
        <dbReference type="ChEBI" id="CHEBI:57936"/>
        <dbReference type="ChEBI" id="CHEBI:456216"/>
        <dbReference type="EC" id="2.7.2.8"/>
    </reaction>
</comment>
<comment type="pathway">
    <text>Amino-acid biosynthesis; L-arginine biosynthesis; N(2)-acetyl-L-ornithine from L-glutamate: step 2/4.</text>
</comment>
<comment type="pathway">
    <text>Amino-acid biosynthesis; L-arginine biosynthesis; N(2)-acetyl-L-ornithine from L-glutamate: step 3/4.</text>
</comment>
<comment type="subcellular location">
    <subcellularLocation>
        <location evidence="1">Mitochondrion</location>
    </subcellularLocation>
</comment>
<comment type="similarity">
    <text evidence="5">In the N-terminal section; belongs to the acetylglutamate kinase family.</text>
</comment>
<comment type="similarity">
    <text evidence="5">In the C-terminal section; belongs to the NAGSA dehydrogenase family.</text>
</comment>
<dbReference type="EC" id="1.2.1.38"/>
<dbReference type="EC" id="2.7.2.8"/>
<dbReference type="EMBL" id="AAFI02000085">
    <property type="protein sequence ID" value="EAL64304.1"/>
    <property type="molecule type" value="Genomic_DNA"/>
</dbReference>
<dbReference type="RefSeq" id="XP_637813.1">
    <property type="nucleotide sequence ID" value="XM_632721.1"/>
</dbReference>
<dbReference type="SMR" id="Q54M18"/>
<dbReference type="FunCoup" id="Q54M18">
    <property type="interactions" value="62"/>
</dbReference>
<dbReference type="STRING" id="44689.Q54M18"/>
<dbReference type="PaxDb" id="44689-DDB0231462"/>
<dbReference type="EnsemblProtists" id="EAL64304">
    <property type="protein sequence ID" value="EAL64304"/>
    <property type="gene ID" value="DDB_G0286257"/>
</dbReference>
<dbReference type="GeneID" id="8625527"/>
<dbReference type="KEGG" id="ddi:DDB_G0286257"/>
<dbReference type="dictyBase" id="DDB_G0286257">
    <property type="gene designation" value="argC"/>
</dbReference>
<dbReference type="VEuPathDB" id="AmoebaDB:DDB_G0286257"/>
<dbReference type="eggNOG" id="KOG2436">
    <property type="taxonomic scope" value="Eukaryota"/>
</dbReference>
<dbReference type="eggNOG" id="KOG4354">
    <property type="taxonomic scope" value="Eukaryota"/>
</dbReference>
<dbReference type="HOGENOM" id="CLU_006384_4_0_1"/>
<dbReference type="InParanoid" id="Q54M18"/>
<dbReference type="OMA" id="IAFIPHV"/>
<dbReference type="PhylomeDB" id="Q54M18"/>
<dbReference type="Reactome" id="R-DDI-70635">
    <property type="pathway name" value="Urea cycle"/>
</dbReference>
<dbReference type="UniPathway" id="UPA00068">
    <property type="reaction ID" value="UER00107"/>
</dbReference>
<dbReference type="UniPathway" id="UPA00068">
    <property type="reaction ID" value="UER00108"/>
</dbReference>
<dbReference type="PRO" id="PR:Q54M18"/>
<dbReference type="Proteomes" id="UP000002195">
    <property type="component" value="Chromosome 4"/>
</dbReference>
<dbReference type="GO" id="GO:0005759">
    <property type="term" value="C:mitochondrial matrix"/>
    <property type="evidence" value="ECO:0000318"/>
    <property type="project" value="GO_Central"/>
</dbReference>
<dbReference type="GO" id="GO:0003991">
    <property type="term" value="F:acetylglutamate kinase activity"/>
    <property type="evidence" value="ECO:0000250"/>
    <property type="project" value="dictyBase"/>
</dbReference>
<dbReference type="GO" id="GO:0005524">
    <property type="term" value="F:ATP binding"/>
    <property type="evidence" value="ECO:0007669"/>
    <property type="project" value="UniProtKB-KW"/>
</dbReference>
<dbReference type="GO" id="GO:0003942">
    <property type="term" value="F:N-acetyl-gamma-glutamyl-phosphate reductase activity"/>
    <property type="evidence" value="ECO:0000250"/>
    <property type="project" value="dictyBase"/>
</dbReference>
<dbReference type="GO" id="GO:0051287">
    <property type="term" value="F:NAD binding"/>
    <property type="evidence" value="ECO:0007669"/>
    <property type="project" value="InterPro"/>
</dbReference>
<dbReference type="GO" id="GO:0070401">
    <property type="term" value="F:NADP+ binding"/>
    <property type="evidence" value="ECO:0007669"/>
    <property type="project" value="InterPro"/>
</dbReference>
<dbReference type="GO" id="GO:0006526">
    <property type="term" value="P:L-arginine biosynthetic process"/>
    <property type="evidence" value="ECO:0000318"/>
    <property type="project" value="GO_Central"/>
</dbReference>
<dbReference type="CDD" id="cd04252">
    <property type="entry name" value="AAK_NAGK-fArgBP"/>
    <property type="match status" value="1"/>
</dbReference>
<dbReference type="CDD" id="cd23936">
    <property type="entry name" value="AGPR_C_ARG5_6_like"/>
    <property type="match status" value="1"/>
</dbReference>
<dbReference type="CDD" id="cd24149">
    <property type="entry name" value="AGPR_N_ARG5_6_like"/>
    <property type="match status" value="1"/>
</dbReference>
<dbReference type="FunFam" id="3.40.630.30:FF:000389">
    <property type="entry name" value="Bifunctional protein argC, mitochondrial"/>
    <property type="match status" value="1"/>
</dbReference>
<dbReference type="FunFam" id="3.30.360.10:FF:000014">
    <property type="entry name" value="N-acetyl-gamma-glutamyl-phosphate reductase"/>
    <property type="match status" value="1"/>
</dbReference>
<dbReference type="FunFam" id="3.40.1160.10:FF:000046">
    <property type="entry name" value="N-acetylglutamate kinase / N-acetylglutamate synthase"/>
    <property type="match status" value="1"/>
</dbReference>
<dbReference type="Gene3D" id="3.40.630.30">
    <property type="match status" value="1"/>
</dbReference>
<dbReference type="Gene3D" id="3.40.1160.10">
    <property type="entry name" value="Acetylglutamate kinase-like"/>
    <property type="match status" value="1"/>
</dbReference>
<dbReference type="Gene3D" id="3.30.360.10">
    <property type="entry name" value="Dihydrodipicolinate Reductase, domain 2"/>
    <property type="match status" value="1"/>
</dbReference>
<dbReference type="Gene3D" id="3.40.50.720">
    <property type="entry name" value="NAD(P)-binding Rossmann-like Domain"/>
    <property type="match status" value="1"/>
</dbReference>
<dbReference type="HAMAP" id="MF_00150">
    <property type="entry name" value="ArgC_type1"/>
    <property type="match status" value="1"/>
</dbReference>
<dbReference type="InterPro" id="IPR036393">
    <property type="entry name" value="AceGlu_kinase-like_sf"/>
</dbReference>
<dbReference type="InterPro" id="IPR004662">
    <property type="entry name" value="AcgluKinase_fam"/>
</dbReference>
<dbReference type="InterPro" id="IPR023013">
    <property type="entry name" value="AGPR_AS"/>
</dbReference>
<dbReference type="InterPro" id="IPR000706">
    <property type="entry name" value="AGPR_type-1"/>
</dbReference>
<dbReference type="InterPro" id="IPR001048">
    <property type="entry name" value="Asp/Glu/Uridylate_kinase"/>
</dbReference>
<dbReference type="InterPro" id="IPR036291">
    <property type="entry name" value="NAD(P)-bd_dom_sf"/>
</dbReference>
<dbReference type="InterPro" id="IPR041734">
    <property type="entry name" value="NAGK-fArgBP"/>
</dbReference>
<dbReference type="InterPro" id="IPR011241">
    <property type="entry name" value="NAGK/NAGSA"/>
</dbReference>
<dbReference type="InterPro" id="IPR000534">
    <property type="entry name" value="Semialdehyde_DH_NAD-bd"/>
</dbReference>
<dbReference type="InterPro" id="IPR006855">
    <property type="entry name" value="Vertebrate-like_GNAT_dom"/>
</dbReference>
<dbReference type="NCBIfam" id="TIGR00761">
    <property type="entry name" value="argB"/>
    <property type="match status" value="1"/>
</dbReference>
<dbReference type="NCBIfam" id="TIGR01850">
    <property type="entry name" value="argC"/>
    <property type="match status" value="1"/>
</dbReference>
<dbReference type="PANTHER" id="PTHR23342">
    <property type="entry name" value="N-ACETYLGLUTAMATE SYNTHASE"/>
    <property type="match status" value="1"/>
</dbReference>
<dbReference type="PANTHER" id="PTHR23342:SF0">
    <property type="entry name" value="N-ACETYLGLUTAMATE SYNTHASE, MITOCHONDRIAL"/>
    <property type="match status" value="1"/>
</dbReference>
<dbReference type="Pfam" id="PF00696">
    <property type="entry name" value="AA_kinase"/>
    <property type="match status" value="1"/>
</dbReference>
<dbReference type="Pfam" id="PF04768">
    <property type="entry name" value="NAT"/>
    <property type="match status" value="1"/>
</dbReference>
<dbReference type="Pfam" id="PF01118">
    <property type="entry name" value="Semialdhyde_dh"/>
    <property type="match status" value="1"/>
</dbReference>
<dbReference type="Pfam" id="PF22698">
    <property type="entry name" value="Semialdhyde_dhC_1"/>
    <property type="match status" value="1"/>
</dbReference>
<dbReference type="PIRSF" id="PIRSF036440">
    <property type="entry name" value="ARG5-6"/>
    <property type="match status" value="1"/>
</dbReference>
<dbReference type="SMART" id="SM00859">
    <property type="entry name" value="Semialdhyde_dh"/>
    <property type="match status" value="1"/>
</dbReference>
<dbReference type="SUPFAM" id="SSF53633">
    <property type="entry name" value="Carbamate kinase-like"/>
    <property type="match status" value="1"/>
</dbReference>
<dbReference type="SUPFAM" id="SSF55347">
    <property type="entry name" value="Glyceraldehyde-3-phosphate dehydrogenase-like, C-terminal domain"/>
    <property type="match status" value="1"/>
</dbReference>
<dbReference type="SUPFAM" id="SSF51735">
    <property type="entry name" value="NAD(P)-binding Rossmann-fold domains"/>
    <property type="match status" value="1"/>
</dbReference>
<dbReference type="PROSITE" id="PS01224">
    <property type="entry name" value="ARGC"/>
    <property type="match status" value="1"/>
</dbReference>
<dbReference type="PROSITE" id="PS51731">
    <property type="entry name" value="GNAT_NAGS"/>
    <property type="match status" value="1"/>
</dbReference>
<feature type="transit peptide" description="Mitochondrion" evidence="2">
    <location>
        <begin position="1"/>
        <end status="unknown"/>
    </location>
</feature>
<feature type="chain" id="PRO_0000332966" description="Bifunctional protein argC, mitochondrial">
    <location>
        <begin status="unknown"/>
        <end position="847"/>
    </location>
</feature>
<feature type="domain" description="N-acetyltransferase" evidence="3">
    <location>
        <begin position="352"/>
        <end position="508"/>
    </location>
</feature>
<feature type="region of interest" description="Acetylglutamate kinase">
    <location>
        <begin position="100"/>
        <end position="331"/>
    </location>
</feature>
<feature type="region of interest" description="N-acetyl-gamma-glutamyl-phosphate reductase">
    <location>
        <begin position="531"/>
        <end position="846"/>
    </location>
</feature>
<feature type="active site" evidence="4">
    <location>
        <position position="665"/>
    </location>
</feature>
<keyword id="KW-0028">Amino-acid biosynthesis</keyword>
<keyword id="KW-0055">Arginine biosynthesis</keyword>
<keyword id="KW-0067">ATP-binding</keyword>
<keyword id="KW-0903">Direct protein sequencing</keyword>
<keyword id="KW-0418">Kinase</keyword>
<keyword id="KW-0496">Mitochondrion</keyword>
<keyword id="KW-0511">Multifunctional enzyme</keyword>
<keyword id="KW-0521">NADP</keyword>
<keyword id="KW-0547">Nucleotide-binding</keyword>
<keyword id="KW-0560">Oxidoreductase</keyword>
<keyword id="KW-1185">Reference proteome</keyword>
<keyword id="KW-0808">Transferase</keyword>
<keyword id="KW-0809">Transit peptide</keyword>